<sequence>MTATLLTAEQLSSVAEKLPGWTLADQRLQRQWRFRNFVEAFGFMTRVALLAEAMNHHPEWSNVYATVTIELTTHDVNGLSDRDLKLAEAINLLEPG</sequence>
<evidence type="ECO:0000255" key="1">
    <source>
        <dbReference type="HAMAP-Rule" id="MF_00434"/>
    </source>
</evidence>
<keyword id="KW-0456">Lyase</keyword>
<keyword id="KW-1185">Reference proteome</keyword>
<reference key="1">
    <citation type="journal article" date="2003" name="Nature">
        <title>Genome divergence in two Prochlorococcus ecotypes reflects oceanic niche differentiation.</title>
        <authorList>
            <person name="Rocap G."/>
            <person name="Larimer F.W."/>
            <person name="Lamerdin J.E."/>
            <person name="Malfatti S."/>
            <person name="Chain P."/>
            <person name="Ahlgren N.A."/>
            <person name="Arellano A."/>
            <person name="Coleman M."/>
            <person name="Hauser L."/>
            <person name="Hess W.R."/>
            <person name="Johnson Z.I."/>
            <person name="Land M.L."/>
            <person name="Lindell D."/>
            <person name="Post A.F."/>
            <person name="Regala W."/>
            <person name="Shah M."/>
            <person name="Shaw S.L."/>
            <person name="Steglich C."/>
            <person name="Sullivan M.B."/>
            <person name="Ting C.S."/>
            <person name="Tolonen A."/>
            <person name="Webb E.A."/>
            <person name="Zinser E.R."/>
            <person name="Chisholm S.W."/>
        </authorList>
    </citation>
    <scope>NUCLEOTIDE SEQUENCE [LARGE SCALE GENOMIC DNA]</scope>
    <source>
        <strain>MIT 9313</strain>
    </source>
</reference>
<comment type="catalytic activity">
    <reaction evidence="1">
        <text>(4aS,6R)-4a-hydroxy-L-erythro-5,6,7,8-tetrahydrobiopterin = (6R)-L-erythro-6,7-dihydrobiopterin + H2O</text>
        <dbReference type="Rhea" id="RHEA:11920"/>
        <dbReference type="ChEBI" id="CHEBI:15377"/>
        <dbReference type="ChEBI" id="CHEBI:15642"/>
        <dbReference type="ChEBI" id="CHEBI:43120"/>
        <dbReference type="EC" id="4.2.1.96"/>
    </reaction>
</comment>
<comment type="similarity">
    <text evidence="1">Belongs to the pterin-4-alpha-carbinolamine dehydratase family.</text>
</comment>
<dbReference type="EC" id="4.2.1.96" evidence="1"/>
<dbReference type="EMBL" id="BX548175">
    <property type="protein sequence ID" value="CAE21458.1"/>
    <property type="molecule type" value="Genomic_DNA"/>
</dbReference>
<dbReference type="RefSeq" id="WP_011130652.1">
    <property type="nucleotide sequence ID" value="NC_005071.1"/>
</dbReference>
<dbReference type="SMR" id="Q7V689"/>
<dbReference type="KEGG" id="pmt:PMT_1283"/>
<dbReference type="eggNOG" id="COG2154">
    <property type="taxonomic scope" value="Bacteria"/>
</dbReference>
<dbReference type="HOGENOM" id="CLU_081974_3_2_3"/>
<dbReference type="OrthoDB" id="9794987at2"/>
<dbReference type="Proteomes" id="UP000001423">
    <property type="component" value="Chromosome"/>
</dbReference>
<dbReference type="GO" id="GO:0008124">
    <property type="term" value="F:4-alpha-hydroxytetrahydrobiopterin dehydratase activity"/>
    <property type="evidence" value="ECO:0007669"/>
    <property type="project" value="UniProtKB-UniRule"/>
</dbReference>
<dbReference type="GO" id="GO:0006729">
    <property type="term" value="P:tetrahydrobiopterin biosynthetic process"/>
    <property type="evidence" value="ECO:0007669"/>
    <property type="project" value="InterPro"/>
</dbReference>
<dbReference type="CDD" id="cd00914">
    <property type="entry name" value="PCD_DCoH_subfamily_b"/>
    <property type="match status" value="1"/>
</dbReference>
<dbReference type="Gene3D" id="3.30.1360.20">
    <property type="entry name" value="Transcriptional coactivator/pterin dehydratase"/>
    <property type="match status" value="1"/>
</dbReference>
<dbReference type="HAMAP" id="MF_00434">
    <property type="entry name" value="Pterin_4_alpha"/>
    <property type="match status" value="1"/>
</dbReference>
<dbReference type="InterPro" id="IPR036428">
    <property type="entry name" value="PCD_sf"/>
</dbReference>
<dbReference type="InterPro" id="IPR001533">
    <property type="entry name" value="Pterin_deHydtase"/>
</dbReference>
<dbReference type="NCBIfam" id="NF002017">
    <property type="entry name" value="PRK00823.1-2"/>
    <property type="match status" value="1"/>
</dbReference>
<dbReference type="NCBIfam" id="NF002018">
    <property type="entry name" value="PRK00823.1-3"/>
    <property type="match status" value="1"/>
</dbReference>
<dbReference type="PANTHER" id="PTHR12599">
    <property type="entry name" value="PTERIN-4-ALPHA-CARBINOLAMINE DEHYDRATASE"/>
    <property type="match status" value="1"/>
</dbReference>
<dbReference type="PANTHER" id="PTHR12599:SF0">
    <property type="entry name" value="PTERIN-4-ALPHA-CARBINOLAMINE DEHYDRATASE"/>
    <property type="match status" value="1"/>
</dbReference>
<dbReference type="Pfam" id="PF01329">
    <property type="entry name" value="Pterin_4a"/>
    <property type="match status" value="1"/>
</dbReference>
<dbReference type="SUPFAM" id="SSF55248">
    <property type="entry name" value="PCD-like"/>
    <property type="match status" value="1"/>
</dbReference>
<proteinExistence type="inferred from homology"/>
<protein>
    <recommendedName>
        <fullName evidence="1">Putative pterin-4-alpha-carbinolamine dehydratase</fullName>
        <shortName evidence="1">PHS</shortName>
        <ecNumber evidence="1">4.2.1.96</ecNumber>
    </recommendedName>
    <alternativeName>
        <fullName evidence="1">4-alpha-hydroxy-tetrahydropterin dehydratase</fullName>
    </alternativeName>
    <alternativeName>
        <fullName evidence="1">Pterin carbinolamine dehydratase</fullName>
        <shortName evidence="1">PCD</shortName>
    </alternativeName>
</protein>
<gene>
    <name type="ordered locus">PMT_1283</name>
</gene>
<accession>Q7V689</accession>
<name>PHS_PROMM</name>
<feature type="chain" id="PRO_0000063089" description="Putative pterin-4-alpha-carbinolamine dehydratase">
    <location>
        <begin position="1"/>
        <end position="96"/>
    </location>
</feature>
<organism>
    <name type="scientific">Prochlorococcus marinus (strain MIT 9313)</name>
    <dbReference type="NCBI Taxonomy" id="74547"/>
    <lineage>
        <taxon>Bacteria</taxon>
        <taxon>Bacillati</taxon>
        <taxon>Cyanobacteriota</taxon>
        <taxon>Cyanophyceae</taxon>
        <taxon>Synechococcales</taxon>
        <taxon>Prochlorococcaceae</taxon>
        <taxon>Prochlorococcus</taxon>
    </lineage>
</organism>